<comment type="function">
    <text evidence="5">Catalyzes the formation of S-adenosylmethionine from methionine and ATP. The reaction comprises two steps that are both catalyzed by the same enzyme: formation of S-adenosylmethionine (AdoMet) and triphosphate, and subsequent hydrolysis of the triphosphate.</text>
</comment>
<comment type="catalytic activity">
    <reaction evidence="5">
        <text>L-methionine + ATP + H2O = S-adenosyl-L-methionine + phosphate + diphosphate</text>
        <dbReference type="Rhea" id="RHEA:21080"/>
        <dbReference type="ChEBI" id="CHEBI:15377"/>
        <dbReference type="ChEBI" id="CHEBI:30616"/>
        <dbReference type="ChEBI" id="CHEBI:33019"/>
        <dbReference type="ChEBI" id="CHEBI:43474"/>
        <dbReference type="ChEBI" id="CHEBI:57844"/>
        <dbReference type="ChEBI" id="CHEBI:59789"/>
        <dbReference type="EC" id="2.5.1.6"/>
    </reaction>
</comment>
<comment type="cofactor">
    <cofactor evidence="5">
        <name>Mn(2+)</name>
        <dbReference type="ChEBI" id="CHEBI:29035"/>
    </cofactor>
    <cofactor evidence="5">
        <name>Mg(2+)</name>
        <dbReference type="ChEBI" id="CHEBI:18420"/>
    </cofactor>
    <cofactor evidence="5">
        <name>Co(2+)</name>
        <dbReference type="ChEBI" id="CHEBI:48828"/>
    </cofactor>
    <text evidence="3 5">Binds 2 divalent ions per subunit. The metal ions interact primarily with the substrate (By similarity). Can utilize magnesium, manganese or cobalt (in vitro) (By similarity).</text>
</comment>
<comment type="cofactor">
    <cofactor evidence="5">
        <name>K(+)</name>
        <dbReference type="ChEBI" id="CHEBI:29103"/>
    </cofactor>
    <text evidence="3">Binds 1 potassium ion per subunit. The potassium ion interacts primarily with the substrate (By similarity).</text>
</comment>
<comment type="pathway">
    <text evidence="5">Amino-acid biosynthesis; S-adenosyl-L-methionine biosynthesis; S-adenosyl-L-methionine from L-methionine: step 1/1.</text>
</comment>
<comment type="subunit">
    <text evidence="1">Homotetramer.</text>
</comment>
<comment type="subcellular location">
    <subcellularLocation>
        <location evidence="1">Cytoplasm</location>
    </subcellularLocation>
</comment>
<comment type="tissue specificity">
    <text evidence="6">Roots and shoots.</text>
</comment>
<comment type="developmental stage">
    <text evidence="6">Down-regulated during adventitious root formation.</text>
</comment>
<comment type="similarity">
    <text evidence="7">Belongs to the AdoMet synthase family.</text>
</comment>
<feature type="chain" id="PRO_0000363041" description="S-adenosylmethionine synthase 2">
    <location>
        <begin position="1"/>
        <end position="393"/>
    </location>
</feature>
<feature type="binding site" evidence="3">
    <location>
        <position position="9"/>
    </location>
    <ligand>
        <name>Mg(2+)</name>
        <dbReference type="ChEBI" id="CHEBI:18420"/>
    </ligand>
</feature>
<feature type="binding site" description="in other chain" evidence="4">
    <location>
        <position position="15"/>
    </location>
    <ligand>
        <name>ATP</name>
        <dbReference type="ChEBI" id="CHEBI:30616"/>
        <note>ligand shared between two neighboring subunits</note>
    </ligand>
</feature>
<feature type="binding site" evidence="2">
    <location>
        <position position="43"/>
    </location>
    <ligand>
        <name>K(+)</name>
        <dbReference type="ChEBI" id="CHEBI:29103"/>
    </ligand>
</feature>
<feature type="binding site" description="in other chain" evidence="2">
    <location>
        <position position="56"/>
    </location>
    <ligand>
        <name>L-methionine</name>
        <dbReference type="ChEBI" id="CHEBI:57844"/>
        <note>ligand shared between two neighboring subunits</note>
    </ligand>
</feature>
<feature type="binding site" description="in other chain" evidence="2">
    <location>
        <position position="99"/>
    </location>
    <ligand>
        <name>L-methionine</name>
        <dbReference type="ChEBI" id="CHEBI:57844"/>
        <note>ligand shared between two neighboring subunits</note>
    </ligand>
</feature>
<feature type="binding site" description="in other chain" evidence="4">
    <location>
        <begin position="167"/>
        <end position="169"/>
    </location>
    <ligand>
        <name>ATP</name>
        <dbReference type="ChEBI" id="CHEBI:30616"/>
        <note>ligand shared between two neighboring subunits</note>
    </ligand>
</feature>
<feature type="binding site" description="in other chain" evidence="4">
    <location>
        <begin position="235"/>
        <end position="238"/>
    </location>
    <ligand>
        <name>ATP</name>
        <dbReference type="ChEBI" id="CHEBI:30616"/>
        <note>ligand shared between two neighboring subunits</note>
    </ligand>
</feature>
<feature type="binding site" description="in other chain" evidence="4">
    <location>
        <position position="246"/>
    </location>
    <ligand>
        <name>ATP</name>
        <dbReference type="ChEBI" id="CHEBI:30616"/>
        <note>ligand shared between two neighboring subunits</note>
    </ligand>
</feature>
<feature type="binding site" evidence="2">
    <location>
        <position position="246"/>
    </location>
    <ligand>
        <name>L-methionine</name>
        <dbReference type="ChEBI" id="CHEBI:57844"/>
        <note>ligand shared between two neighboring subunits</note>
    </ligand>
</feature>
<feature type="binding site" description="in other chain" evidence="2">
    <location>
        <begin position="252"/>
        <end position="253"/>
    </location>
    <ligand>
        <name>ATP</name>
        <dbReference type="ChEBI" id="CHEBI:30616"/>
        <note>ligand shared between two neighboring subunits</note>
    </ligand>
</feature>
<feature type="binding site" evidence="2">
    <location>
        <position position="269"/>
    </location>
    <ligand>
        <name>ATP</name>
        <dbReference type="ChEBI" id="CHEBI:30616"/>
        <note>ligand shared between two neighboring subunits</note>
    </ligand>
</feature>
<feature type="binding site" evidence="2">
    <location>
        <position position="273"/>
    </location>
    <ligand>
        <name>ATP</name>
        <dbReference type="ChEBI" id="CHEBI:30616"/>
        <note>ligand shared between two neighboring subunits</note>
    </ligand>
</feature>
<feature type="binding site" evidence="3">
    <location>
        <position position="277"/>
    </location>
    <ligand>
        <name>ATP</name>
        <dbReference type="ChEBI" id="CHEBI:30616"/>
        <note>ligand shared between two neighboring subunits</note>
    </ligand>
</feature>
<feature type="binding site" description="in other chain" evidence="2">
    <location>
        <position position="277"/>
    </location>
    <ligand>
        <name>L-methionine</name>
        <dbReference type="ChEBI" id="CHEBI:57844"/>
        <note>ligand shared between two neighboring subunits</note>
    </ligand>
</feature>
<protein>
    <recommendedName>
        <fullName>S-adenosylmethionine synthase 2</fullName>
        <shortName>AdoMet synthase 2</shortName>
        <ecNumber evidence="5">2.5.1.6</ecNumber>
    </recommendedName>
    <alternativeName>
        <fullName>Methionine adenosyltransferase 2</fullName>
        <shortName>MAT 2</shortName>
    </alternativeName>
</protein>
<reference key="1">
    <citation type="journal article" date="2001" name="Plant Mol. Biol.">
        <title>Two S-adenosylmethionine synthetase-encoding genes differentially expressed during adventitious root development in Pinus contorta.</title>
        <authorList>
            <person name="Lindroth A.M."/>
            <person name="Saarikoski P."/>
            <person name="Flygh G."/>
            <person name="Clapham D."/>
            <person name="Groenroos R."/>
            <person name="Thelander M."/>
            <person name="Ronne H."/>
            <person name="von Arnold S."/>
        </authorList>
    </citation>
    <scope>NUCLEOTIDE SEQUENCE [MRNA]</scope>
    <scope>TISSUE SPECIFICITY</scope>
    <scope>DEVELOPMENTAL STAGE</scope>
    <source>
        <tissue>Root</tissue>
    </source>
</reference>
<keyword id="KW-0067">ATP-binding</keyword>
<keyword id="KW-0170">Cobalt</keyword>
<keyword id="KW-0963">Cytoplasm</keyword>
<keyword id="KW-0460">Magnesium</keyword>
<keyword id="KW-0479">Metal-binding</keyword>
<keyword id="KW-0547">Nucleotide-binding</keyword>
<keyword id="KW-0554">One-carbon metabolism</keyword>
<keyword id="KW-0630">Potassium</keyword>
<keyword id="KW-0808">Transferase</keyword>
<gene>
    <name type="primary">SAMS2</name>
</gene>
<organism>
    <name type="scientific">Pinus contorta</name>
    <name type="common">Shore pine</name>
    <name type="synonym">Lodgepole pine</name>
    <dbReference type="NCBI Taxonomy" id="3339"/>
    <lineage>
        <taxon>Eukaryota</taxon>
        <taxon>Viridiplantae</taxon>
        <taxon>Streptophyta</taxon>
        <taxon>Embryophyta</taxon>
        <taxon>Tracheophyta</taxon>
        <taxon>Spermatophyta</taxon>
        <taxon>Pinopsida</taxon>
        <taxon>Pinidae</taxon>
        <taxon>Conifers I</taxon>
        <taxon>Pinales</taxon>
        <taxon>Pinaceae</taxon>
        <taxon>Pinus</taxon>
        <taxon>Pinus subgen. Pinus</taxon>
    </lineage>
</organism>
<proteinExistence type="evidence at transcript level"/>
<sequence>METFLFTSESVNEGHPDKLCDQISDAVLDACLTQDPDSKVACETCTKTNMVMVFGEITTKADVDYEQIVRKTCREIGFISDDVGLDADHCKVLVNIEQQSPDIAQGVHGHFTKRPEEIGAGDQGHMFGYATDETPELMPLTHVLATKLGAKLTEVRKNGTCPWLRPDGKTQVTIEYRNEGGAMVPERVHTVLISTQHDETVTNDQIAADLKEHVIKPVIPEKYLDENTIFHLNPSGRFVIGGPHGDAGLTGRKIIIDTYGGWGAHGGGAFSGKDPTKVDRSGAYIVRQAAKSIVAAGLARRCLVQVSYAIGVRGALSIFVDSYGTGSIPDKEILEIIKEHFDFRPGMITINLDLKRGGNGRFQKTAAYGHFGRDDPDFTWETVKPLKWEKAQA</sequence>
<accession>Q9FVG7</accession>
<evidence type="ECO:0000250" key="1"/>
<evidence type="ECO:0000250" key="2">
    <source>
        <dbReference type="UniProtKB" id="P0A817"/>
    </source>
</evidence>
<evidence type="ECO:0000250" key="3">
    <source>
        <dbReference type="UniProtKB" id="P13444"/>
    </source>
</evidence>
<evidence type="ECO:0000250" key="4">
    <source>
        <dbReference type="UniProtKB" id="Q00266"/>
    </source>
</evidence>
<evidence type="ECO:0000250" key="5">
    <source>
        <dbReference type="UniProtKB" id="Q96551"/>
    </source>
</evidence>
<evidence type="ECO:0000269" key="6">
    <source>
    </source>
</evidence>
<evidence type="ECO:0000305" key="7"/>
<dbReference type="EC" id="2.5.1.6" evidence="5"/>
<dbReference type="EMBL" id="AF187821">
    <property type="protein sequence ID" value="AAG17036.1"/>
    <property type="molecule type" value="mRNA"/>
</dbReference>
<dbReference type="SMR" id="Q9FVG7"/>
<dbReference type="UniPathway" id="UPA00315">
    <property type="reaction ID" value="UER00080"/>
</dbReference>
<dbReference type="GO" id="GO:0005737">
    <property type="term" value="C:cytoplasm"/>
    <property type="evidence" value="ECO:0007669"/>
    <property type="project" value="UniProtKB-SubCell"/>
</dbReference>
<dbReference type="GO" id="GO:0005524">
    <property type="term" value="F:ATP binding"/>
    <property type="evidence" value="ECO:0007669"/>
    <property type="project" value="UniProtKB-KW"/>
</dbReference>
<dbReference type="GO" id="GO:0046872">
    <property type="term" value="F:metal ion binding"/>
    <property type="evidence" value="ECO:0007669"/>
    <property type="project" value="UniProtKB-KW"/>
</dbReference>
<dbReference type="GO" id="GO:0004478">
    <property type="term" value="F:methionine adenosyltransferase activity"/>
    <property type="evidence" value="ECO:0007669"/>
    <property type="project" value="UniProtKB-EC"/>
</dbReference>
<dbReference type="GO" id="GO:0006730">
    <property type="term" value="P:one-carbon metabolic process"/>
    <property type="evidence" value="ECO:0007669"/>
    <property type="project" value="UniProtKB-KW"/>
</dbReference>
<dbReference type="GO" id="GO:0006556">
    <property type="term" value="P:S-adenosylmethionine biosynthetic process"/>
    <property type="evidence" value="ECO:0007669"/>
    <property type="project" value="UniProtKB-UniPathway"/>
</dbReference>
<dbReference type="CDD" id="cd18079">
    <property type="entry name" value="S-AdoMet_synt"/>
    <property type="match status" value="1"/>
</dbReference>
<dbReference type="FunFam" id="3.30.300.10:FF:000001">
    <property type="entry name" value="S-adenosylmethionine synthase"/>
    <property type="match status" value="1"/>
</dbReference>
<dbReference type="FunFam" id="3.30.300.10:FF:000003">
    <property type="entry name" value="S-adenosylmethionine synthase"/>
    <property type="match status" value="1"/>
</dbReference>
<dbReference type="FunFam" id="3.30.300.10:FF:000004">
    <property type="entry name" value="S-adenosylmethionine synthase"/>
    <property type="match status" value="1"/>
</dbReference>
<dbReference type="Gene3D" id="3.30.300.10">
    <property type="match status" value="3"/>
</dbReference>
<dbReference type="HAMAP" id="MF_00086">
    <property type="entry name" value="S_AdoMet_synth1"/>
    <property type="match status" value="1"/>
</dbReference>
<dbReference type="InterPro" id="IPR022631">
    <property type="entry name" value="ADOMET_SYNTHASE_CS"/>
</dbReference>
<dbReference type="InterPro" id="IPR022630">
    <property type="entry name" value="S-AdoMet_synt_C"/>
</dbReference>
<dbReference type="InterPro" id="IPR022629">
    <property type="entry name" value="S-AdoMet_synt_central"/>
</dbReference>
<dbReference type="InterPro" id="IPR022628">
    <property type="entry name" value="S-AdoMet_synt_N"/>
</dbReference>
<dbReference type="InterPro" id="IPR002133">
    <property type="entry name" value="S-AdoMet_synthetase"/>
</dbReference>
<dbReference type="InterPro" id="IPR022636">
    <property type="entry name" value="S-AdoMet_synthetase_sfam"/>
</dbReference>
<dbReference type="NCBIfam" id="TIGR01034">
    <property type="entry name" value="metK"/>
    <property type="match status" value="1"/>
</dbReference>
<dbReference type="PANTHER" id="PTHR11964">
    <property type="entry name" value="S-ADENOSYLMETHIONINE SYNTHETASE"/>
    <property type="match status" value="1"/>
</dbReference>
<dbReference type="Pfam" id="PF02773">
    <property type="entry name" value="S-AdoMet_synt_C"/>
    <property type="match status" value="1"/>
</dbReference>
<dbReference type="Pfam" id="PF02772">
    <property type="entry name" value="S-AdoMet_synt_M"/>
    <property type="match status" value="1"/>
</dbReference>
<dbReference type="Pfam" id="PF00438">
    <property type="entry name" value="S-AdoMet_synt_N"/>
    <property type="match status" value="1"/>
</dbReference>
<dbReference type="PIRSF" id="PIRSF000497">
    <property type="entry name" value="MAT"/>
    <property type="match status" value="1"/>
</dbReference>
<dbReference type="SUPFAM" id="SSF55973">
    <property type="entry name" value="S-adenosylmethionine synthetase"/>
    <property type="match status" value="3"/>
</dbReference>
<dbReference type="PROSITE" id="PS00376">
    <property type="entry name" value="ADOMET_SYNTHASE_1"/>
    <property type="match status" value="1"/>
</dbReference>
<dbReference type="PROSITE" id="PS00377">
    <property type="entry name" value="ADOMET_SYNTHASE_2"/>
    <property type="match status" value="1"/>
</dbReference>
<name>METK2_PINCO</name>